<dbReference type="EMBL" id="L76301">
    <property type="protein sequence ID" value="AAC37054.1"/>
    <property type="molecule type" value="Genomic_DNA"/>
</dbReference>
<dbReference type="EMBL" id="BX936398">
    <property type="protein sequence ID" value="CAH20572.1"/>
    <property type="molecule type" value="Genomic_DNA"/>
</dbReference>
<dbReference type="RefSeq" id="WP_002208796.1">
    <property type="nucleotide sequence ID" value="NZ_CP009712.1"/>
</dbReference>
<dbReference type="SMR" id="P68589"/>
<dbReference type="KEGG" id="ypo:BZ17_1189"/>
<dbReference type="KEGG" id="yps:YPTB1332"/>
<dbReference type="PATRIC" id="fig|273123.14.peg.1269"/>
<dbReference type="Proteomes" id="UP000001011">
    <property type="component" value="Chromosome"/>
</dbReference>
<dbReference type="GO" id="GO:0003677">
    <property type="term" value="F:DNA binding"/>
    <property type="evidence" value="ECO:0007669"/>
    <property type="project" value="UniProtKB-KW"/>
</dbReference>
<dbReference type="GO" id="GO:0000160">
    <property type="term" value="P:phosphorelay signal transduction system"/>
    <property type="evidence" value="ECO:0007669"/>
    <property type="project" value="InterPro"/>
</dbReference>
<dbReference type="GO" id="GO:0006355">
    <property type="term" value="P:regulation of DNA-templated transcription"/>
    <property type="evidence" value="ECO:0007669"/>
    <property type="project" value="InterPro"/>
</dbReference>
<dbReference type="CDD" id="cd00383">
    <property type="entry name" value="trans_reg_C"/>
    <property type="match status" value="1"/>
</dbReference>
<dbReference type="Gene3D" id="1.10.10.10">
    <property type="entry name" value="Winged helix-like DNA-binding domain superfamily/Winged helix DNA-binding domain"/>
    <property type="match status" value="1"/>
</dbReference>
<dbReference type="InterPro" id="IPR001867">
    <property type="entry name" value="OmpR/PhoB-type_DNA-bd"/>
</dbReference>
<dbReference type="InterPro" id="IPR016032">
    <property type="entry name" value="Sig_transdc_resp-reg_C-effctor"/>
</dbReference>
<dbReference type="InterPro" id="IPR036388">
    <property type="entry name" value="WH-like_DNA-bd_sf"/>
</dbReference>
<dbReference type="Pfam" id="PF00486">
    <property type="entry name" value="Trans_reg_C"/>
    <property type="match status" value="1"/>
</dbReference>
<dbReference type="SMART" id="SM00862">
    <property type="entry name" value="Trans_reg_C"/>
    <property type="match status" value="1"/>
</dbReference>
<dbReference type="SUPFAM" id="SSF46894">
    <property type="entry name" value="C-terminal effector domain of the bipartite response regulators"/>
    <property type="match status" value="1"/>
</dbReference>
<dbReference type="PROSITE" id="PS51755">
    <property type="entry name" value="OMPR_PHOB"/>
    <property type="match status" value="1"/>
</dbReference>
<reference key="1">
    <citation type="journal article" date="1996" name="Infect. Immun.">
        <title>The psa locus is responsible for thermoinducible binding of Yersinia pseudotuberculosis to cultured cells.</title>
        <authorList>
            <person name="Yang Y."/>
            <person name="Merriam J.J."/>
            <person name="Mueller J.P."/>
            <person name="Isberg R.R."/>
        </authorList>
    </citation>
    <scope>NUCLEOTIDE SEQUENCE [GENOMIC DNA]</scope>
    <source>
        <strain>YPIII / Serotype O:3</strain>
    </source>
</reference>
<reference key="2">
    <citation type="journal article" date="2004" name="Proc. Natl. Acad. Sci. U.S.A.">
        <title>Insights into the evolution of Yersinia pestis through whole-genome comparison with Yersinia pseudotuberculosis.</title>
        <authorList>
            <person name="Chain P.S.G."/>
            <person name="Carniel E."/>
            <person name="Larimer F.W."/>
            <person name="Lamerdin J."/>
            <person name="Stoutland P.O."/>
            <person name="Regala W.M."/>
            <person name="Georgescu A.M."/>
            <person name="Vergez L.M."/>
            <person name="Land M.L."/>
            <person name="Motin V.L."/>
            <person name="Brubaker R.R."/>
            <person name="Fowler J."/>
            <person name="Hinnebusch J."/>
            <person name="Marceau M."/>
            <person name="Medigue C."/>
            <person name="Simonet M."/>
            <person name="Chenal-Francisque V."/>
            <person name="Souza B."/>
            <person name="Dacheux D."/>
            <person name="Elliott J.M."/>
            <person name="Derbise A."/>
            <person name="Hauser L.J."/>
            <person name="Garcia E."/>
        </authorList>
    </citation>
    <scope>NUCLEOTIDE SEQUENCE [LARGE SCALE GENOMIC DNA]</scope>
    <source>
        <strain>IP32953</strain>
    </source>
</reference>
<organism>
    <name type="scientific">Yersinia pseudotuberculosis serotype I (strain IP32953)</name>
    <dbReference type="NCBI Taxonomy" id="273123"/>
    <lineage>
        <taxon>Bacteria</taxon>
        <taxon>Pseudomonadati</taxon>
        <taxon>Pseudomonadota</taxon>
        <taxon>Gammaproteobacteria</taxon>
        <taxon>Enterobacterales</taxon>
        <taxon>Yersiniaceae</taxon>
        <taxon>Yersinia</taxon>
    </lineage>
</organism>
<sequence length="214" mass="23958">MSHCVVLNKLESVLIIGDSRYALSKNEVLLLECLYLRAGDVISHDELLTTCWPDRVVSPTSLPVAIKHIRDVFRKITRSEVIKTYKNEGYSYQKDSVLIIIDDGSTEKESHSAAYTRKEKPDIPIKLVGLQILSHLNSTFFIAIMMVIIIIFFMVGGNDIVSFIDSDTNSVIITNVTTKMNGPTAGLPKVKNSMIFKDDFGLVIICDQSECKQQ</sequence>
<evidence type="ECO:0000255" key="1">
    <source>
        <dbReference type="PROSITE-ProRule" id="PRU01091"/>
    </source>
</evidence>
<protein>
    <recommendedName>
        <fullName>Protein PsaE</fullName>
    </recommendedName>
</protein>
<feature type="signal peptide">
    <location>
        <begin position="1"/>
        <end position="24"/>
    </location>
</feature>
<feature type="chain" id="PRO_0000022163" description="Protein PsaE">
    <location>
        <begin position="25"/>
        <end position="214"/>
    </location>
</feature>
<feature type="DNA-binding region" description="OmpR/PhoB-type" evidence="1">
    <location>
        <begin position="1"/>
        <end position="94"/>
    </location>
</feature>
<gene>
    <name type="primary">psaE</name>
    <name type="ordered locus">YPTB1332</name>
</gene>
<name>PSAE_YERPS</name>
<keyword id="KW-0238">DNA-binding</keyword>
<keyword id="KW-0732">Signal</keyword>
<keyword id="KW-0804">Transcription</keyword>
<keyword id="KW-0805">Transcription regulation</keyword>
<comment type="function">
    <text>Required for expression of pH 6 antigen.</text>
</comment>
<proteinExistence type="predicted"/>
<accession>P68589</accession>
<accession>P31524</accession>
<accession>Q66CS0</accession>